<accession>Q8R7T3</accession>
<feature type="chain" id="PRO_0000159509" description="Cysteine--tRNA ligase">
    <location>
        <begin position="1"/>
        <end position="467"/>
    </location>
</feature>
<feature type="short sequence motif" description="'HIGH' region">
    <location>
        <begin position="29"/>
        <end position="39"/>
    </location>
</feature>
<feature type="short sequence motif" description="'KMSKS' region">
    <location>
        <begin position="264"/>
        <end position="268"/>
    </location>
</feature>
<feature type="binding site" evidence="1">
    <location>
        <position position="27"/>
    </location>
    <ligand>
        <name>Zn(2+)</name>
        <dbReference type="ChEBI" id="CHEBI:29105"/>
    </ligand>
</feature>
<feature type="binding site" evidence="1">
    <location>
        <position position="207"/>
    </location>
    <ligand>
        <name>Zn(2+)</name>
        <dbReference type="ChEBI" id="CHEBI:29105"/>
    </ligand>
</feature>
<feature type="binding site" evidence="1">
    <location>
        <position position="232"/>
    </location>
    <ligand>
        <name>Zn(2+)</name>
        <dbReference type="ChEBI" id="CHEBI:29105"/>
    </ligand>
</feature>
<feature type="binding site" evidence="1">
    <location>
        <position position="236"/>
    </location>
    <ligand>
        <name>Zn(2+)</name>
        <dbReference type="ChEBI" id="CHEBI:29105"/>
    </ligand>
</feature>
<feature type="binding site" evidence="1">
    <location>
        <position position="267"/>
    </location>
    <ligand>
        <name>ATP</name>
        <dbReference type="ChEBI" id="CHEBI:30616"/>
    </ligand>
</feature>
<protein>
    <recommendedName>
        <fullName evidence="1">Cysteine--tRNA ligase</fullName>
        <ecNumber evidence="1">6.1.1.16</ecNumber>
    </recommendedName>
    <alternativeName>
        <fullName evidence="1">Cysteinyl-tRNA synthetase</fullName>
        <shortName evidence="1">CysRS</shortName>
    </alternativeName>
</protein>
<sequence length="467" mass="54523">MRLYNTMTRTKEEFKPLKDKVVNMYVCGPTVYNYIHIGNARAFIVFDTVRRYLEYKGYTVNYVQNFTDIDDKIINRAKEENTTEKEIAERFIEEYFKDADALGIKRATVHPRATEHIDDIIEFIKILIDKGYAYVVDGNVYFETAKFKDYGKLSHKNIDELMAGARVEIDEKKKNPLDFALWKAQKPGEPAWDSPWGKGRPGWHIECSVMSTKYLGKTLDIHAGGPDLIFPHHENEIAQSEAAYDQPFSKYWMHIGYLNVNNEKMSKSKGNFFTVRELTEKYDPEVLRLFMLMAHYRSPINFSLDLLDQAKSAYERLSNAVVNLKHLANITKDRELSDEEKDLIVKFDEYKKQFEEAMDDDFNTADAISVLFEMAKTANANLSGNSSKKLVEYILEMFLKLSDVLGLSYKNAETEIEDEEILRLIEERQKARKEKNWKLADEIRDKLKERGIILEDTPEGVRWKRIR</sequence>
<proteinExistence type="inferred from homology"/>
<comment type="catalytic activity">
    <reaction evidence="1">
        <text>tRNA(Cys) + L-cysteine + ATP = L-cysteinyl-tRNA(Cys) + AMP + diphosphate</text>
        <dbReference type="Rhea" id="RHEA:17773"/>
        <dbReference type="Rhea" id="RHEA-COMP:9661"/>
        <dbReference type="Rhea" id="RHEA-COMP:9679"/>
        <dbReference type="ChEBI" id="CHEBI:30616"/>
        <dbReference type="ChEBI" id="CHEBI:33019"/>
        <dbReference type="ChEBI" id="CHEBI:35235"/>
        <dbReference type="ChEBI" id="CHEBI:78442"/>
        <dbReference type="ChEBI" id="CHEBI:78517"/>
        <dbReference type="ChEBI" id="CHEBI:456215"/>
        <dbReference type="EC" id="6.1.1.16"/>
    </reaction>
</comment>
<comment type="cofactor">
    <cofactor evidence="1">
        <name>Zn(2+)</name>
        <dbReference type="ChEBI" id="CHEBI:29105"/>
    </cofactor>
    <text evidence="1">Binds 1 zinc ion per subunit.</text>
</comment>
<comment type="subunit">
    <text evidence="1">Monomer.</text>
</comment>
<comment type="subcellular location">
    <subcellularLocation>
        <location evidence="1">Cytoplasm</location>
    </subcellularLocation>
</comment>
<comment type="similarity">
    <text evidence="1">Belongs to the class-I aminoacyl-tRNA synthetase family.</text>
</comment>
<dbReference type="EC" id="6.1.1.16" evidence="1"/>
<dbReference type="EMBL" id="AE008691">
    <property type="protein sequence ID" value="AAM25456.1"/>
    <property type="molecule type" value="Genomic_DNA"/>
</dbReference>
<dbReference type="RefSeq" id="WP_011026359.1">
    <property type="nucleotide sequence ID" value="NC_003869.1"/>
</dbReference>
<dbReference type="SMR" id="Q8R7T3"/>
<dbReference type="STRING" id="273068.TTE2315"/>
<dbReference type="KEGG" id="tte:TTE2315"/>
<dbReference type="eggNOG" id="COG0215">
    <property type="taxonomic scope" value="Bacteria"/>
</dbReference>
<dbReference type="HOGENOM" id="CLU_013528_3_3_9"/>
<dbReference type="OrthoDB" id="9815130at2"/>
<dbReference type="Proteomes" id="UP000000555">
    <property type="component" value="Chromosome"/>
</dbReference>
<dbReference type="GO" id="GO:0005829">
    <property type="term" value="C:cytosol"/>
    <property type="evidence" value="ECO:0007669"/>
    <property type="project" value="TreeGrafter"/>
</dbReference>
<dbReference type="GO" id="GO:0005524">
    <property type="term" value="F:ATP binding"/>
    <property type="evidence" value="ECO:0007669"/>
    <property type="project" value="UniProtKB-UniRule"/>
</dbReference>
<dbReference type="GO" id="GO:0004817">
    <property type="term" value="F:cysteine-tRNA ligase activity"/>
    <property type="evidence" value="ECO:0007669"/>
    <property type="project" value="UniProtKB-UniRule"/>
</dbReference>
<dbReference type="GO" id="GO:0008270">
    <property type="term" value="F:zinc ion binding"/>
    <property type="evidence" value="ECO:0007669"/>
    <property type="project" value="UniProtKB-UniRule"/>
</dbReference>
<dbReference type="GO" id="GO:0006423">
    <property type="term" value="P:cysteinyl-tRNA aminoacylation"/>
    <property type="evidence" value="ECO:0007669"/>
    <property type="project" value="UniProtKB-UniRule"/>
</dbReference>
<dbReference type="CDD" id="cd00672">
    <property type="entry name" value="CysRS_core"/>
    <property type="match status" value="1"/>
</dbReference>
<dbReference type="FunFam" id="3.40.50.620:FF:000009">
    <property type="entry name" value="Cysteine--tRNA ligase"/>
    <property type="match status" value="1"/>
</dbReference>
<dbReference type="Gene3D" id="1.20.120.1910">
    <property type="entry name" value="Cysteine-tRNA ligase, C-terminal anti-codon recognition domain"/>
    <property type="match status" value="1"/>
</dbReference>
<dbReference type="Gene3D" id="3.40.50.620">
    <property type="entry name" value="HUPs"/>
    <property type="match status" value="1"/>
</dbReference>
<dbReference type="HAMAP" id="MF_00041">
    <property type="entry name" value="Cys_tRNA_synth"/>
    <property type="match status" value="1"/>
</dbReference>
<dbReference type="InterPro" id="IPR015803">
    <property type="entry name" value="Cys-tRNA-ligase"/>
</dbReference>
<dbReference type="InterPro" id="IPR015273">
    <property type="entry name" value="Cys-tRNA-synt_Ia_DALR"/>
</dbReference>
<dbReference type="InterPro" id="IPR024909">
    <property type="entry name" value="Cys-tRNA/MSH_ligase"/>
</dbReference>
<dbReference type="InterPro" id="IPR056411">
    <property type="entry name" value="CysS_C"/>
</dbReference>
<dbReference type="InterPro" id="IPR014729">
    <property type="entry name" value="Rossmann-like_a/b/a_fold"/>
</dbReference>
<dbReference type="InterPro" id="IPR032678">
    <property type="entry name" value="tRNA-synt_1_cat_dom"/>
</dbReference>
<dbReference type="InterPro" id="IPR009080">
    <property type="entry name" value="tRNAsynth_Ia_anticodon-bd"/>
</dbReference>
<dbReference type="NCBIfam" id="TIGR00435">
    <property type="entry name" value="cysS"/>
    <property type="match status" value="1"/>
</dbReference>
<dbReference type="PANTHER" id="PTHR10890:SF3">
    <property type="entry name" value="CYSTEINE--TRNA LIGASE, CYTOPLASMIC"/>
    <property type="match status" value="1"/>
</dbReference>
<dbReference type="PANTHER" id="PTHR10890">
    <property type="entry name" value="CYSTEINYL-TRNA SYNTHETASE"/>
    <property type="match status" value="1"/>
</dbReference>
<dbReference type="Pfam" id="PF23493">
    <property type="entry name" value="CysS_C"/>
    <property type="match status" value="1"/>
</dbReference>
<dbReference type="Pfam" id="PF09190">
    <property type="entry name" value="DALR_2"/>
    <property type="match status" value="1"/>
</dbReference>
<dbReference type="Pfam" id="PF01406">
    <property type="entry name" value="tRNA-synt_1e"/>
    <property type="match status" value="1"/>
</dbReference>
<dbReference type="PRINTS" id="PR00983">
    <property type="entry name" value="TRNASYNTHCYS"/>
</dbReference>
<dbReference type="SMART" id="SM00840">
    <property type="entry name" value="DALR_2"/>
    <property type="match status" value="1"/>
</dbReference>
<dbReference type="SUPFAM" id="SSF47323">
    <property type="entry name" value="Anticodon-binding domain of a subclass of class I aminoacyl-tRNA synthetases"/>
    <property type="match status" value="1"/>
</dbReference>
<dbReference type="SUPFAM" id="SSF52374">
    <property type="entry name" value="Nucleotidylyl transferase"/>
    <property type="match status" value="1"/>
</dbReference>
<name>SYC_CALS4</name>
<reference key="1">
    <citation type="journal article" date="2002" name="Genome Res.">
        <title>A complete sequence of the T. tengcongensis genome.</title>
        <authorList>
            <person name="Bao Q."/>
            <person name="Tian Y."/>
            <person name="Li W."/>
            <person name="Xu Z."/>
            <person name="Xuan Z."/>
            <person name="Hu S."/>
            <person name="Dong W."/>
            <person name="Yang J."/>
            <person name="Chen Y."/>
            <person name="Xue Y."/>
            <person name="Xu Y."/>
            <person name="Lai X."/>
            <person name="Huang L."/>
            <person name="Dong X."/>
            <person name="Ma Y."/>
            <person name="Ling L."/>
            <person name="Tan H."/>
            <person name="Chen R."/>
            <person name="Wang J."/>
            <person name="Yu J."/>
            <person name="Yang H."/>
        </authorList>
    </citation>
    <scope>NUCLEOTIDE SEQUENCE [LARGE SCALE GENOMIC DNA]</scope>
    <source>
        <strain>DSM 15242 / JCM 11007 / NBRC 100824 / MB4</strain>
    </source>
</reference>
<evidence type="ECO:0000255" key="1">
    <source>
        <dbReference type="HAMAP-Rule" id="MF_00041"/>
    </source>
</evidence>
<keyword id="KW-0030">Aminoacyl-tRNA synthetase</keyword>
<keyword id="KW-0067">ATP-binding</keyword>
<keyword id="KW-0963">Cytoplasm</keyword>
<keyword id="KW-0436">Ligase</keyword>
<keyword id="KW-0479">Metal-binding</keyword>
<keyword id="KW-0547">Nucleotide-binding</keyword>
<keyword id="KW-0648">Protein biosynthesis</keyword>
<keyword id="KW-1185">Reference proteome</keyword>
<keyword id="KW-0862">Zinc</keyword>
<organism>
    <name type="scientific">Caldanaerobacter subterraneus subsp. tengcongensis (strain DSM 15242 / JCM 11007 / NBRC 100824 / MB4)</name>
    <name type="common">Thermoanaerobacter tengcongensis</name>
    <dbReference type="NCBI Taxonomy" id="273068"/>
    <lineage>
        <taxon>Bacteria</taxon>
        <taxon>Bacillati</taxon>
        <taxon>Bacillota</taxon>
        <taxon>Clostridia</taxon>
        <taxon>Thermoanaerobacterales</taxon>
        <taxon>Thermoanaerobacteraceae</taxon>
        <taxon>Caldanaerobacter</taxon>
    </lineage>
</organism>
<gene>
    <name evidence="1" type="primary">cysS</name>
    <name type="ordered locus">TTE2315</name>
</gene>